<organism>
    <name type="scientific">Gloeobacter violaceus (strain ATCC 29082 / PCC 7421)</name>
    <dbReference type="NCBI Taxonomy" id="251221"/>
    <lineage>
        <taxon>Bacteria</taxon>
        <taxon>Bacillati</taxon>
        <taxon>Cyanobacteriota</taxon>
        <taxon>Cyanophyceae</taxon>
        <taxon>Gloeobacterales</taxon>
        <taxon>Gloeobacteraceae</taxon>
        <taxon>Gloeobacter</taxon>
    </lineage>
</organism>
<comment type="function">
    <text evidence="1">Catalyzes the synthesis of the hydroxymethylpyrimidine phosphate (HMP-P) moiety of thiamine from aminoimidazole ribotide (AIR) in a radical S-adenosyl-L-methionine (SAM)-dependent reaction.</text>
</comment>
<comment type="catalytic activity">
    <reaction evidence="1">
        <text>5-amino-1-(5-phospho-beta-D-ribosyl)imidazole + S-adenosyl-L-methionine = 4-amino-2-methyl-5-(phosphooxymethyl)pyrimidine + CO + 5'-deoxyadenosine + formate + L-methionine + 3 H(+)</text>
        <dbReference type="Rhea" id="RHEA:24840"/>
        <dbReference type="ChEBI" id="CHEBI:15378"/>
        <dbReference type="ChEBI" id="CHEBI:15740"/>
        <dbReference type="ChEBI" id="CHEBI:17245"/>
        <dbReference type="ChEBI" id="CHEBI:17319"/>
        <dbReference type="ChEBI" id="CHEBI:57844"/>
        <dbReference type="ChEBI" id="CHEBI:58354"/>
        <dbReference type="ChEBI" id="CHEBI:59789"/>
        <dbReference type="ChEBI" id="CHEBI:137981"/>
        <dbReference type="EC" id="4.1.99.17"/>
    </reaction>
</comment>
<comment type="cofactor">
    <cofactor evidence="1">
        <name>[4Fe-4S] cluster</name>
        <dbReference type="ChEBI" id="CHEBI:49883"/>
    </cofactor>
    <text evidence="1">Binds 1 [4Fe-4S] cluster per subunit. The cluster is coordinated with 3 cysteines and an exchangeable S-adenosyl-L-methionine.</text>
</comment>
<comment type="pathway">
    <text evidence="1">Cofactor biosynthesis; thiamine diphosphate biosynthesis.</text>
</comment>
<comment type="similarity">
    <text evidence="1">Belongs to the ThiC family.</text>
</comment>
<protein>
    <recommendedName>
        <fullName evidence="1">Phosphomethylpyrimidine synthase</fullName>
        <ecNumber evidence="1">4.1.99.17</ecNumber>
    </recommendedName>
    <alternativeName>
        <fullName evidence="1">Hydroxymethylpyrimidine phosphate synthase</fullName>
        <shortName evidence="1">HMP-P synthase</shortName>
        <shortName evidence="1">HMP-phosphate synthase</shortName>
        <shortName evidence="1">HMPP synthase</shortName>
    </alternativeName>
    <alternativeName>
        <fullName evidence="1">Thiamine biosynthesis protein ThiC</fullName>
    </alternativeName>
</protein>
<dbReference type="EC" id="4.1.99.17" evidence="1"/>
<dbReference type="EMBL" id="BA000045">
    <property type="protein sequence ID" value="BAC89059.1"/>
    <property type="molecule type" value="Genomic_DNA"/>
</dbReference>
<dbReference type="RefSeq" id="NP_924064.1">
    <property type="nucleotide sequence ID" value="NC_005125.1"/>
</dbReference>
<dbReference type="RefSeq" id="WP_011141118.1">
    <property type="nucleotide sequence ID" value="NC_005125.1"/>
</dbReference>
<dbReference type="SMR" id="Q7NLK5"/>
<dbReference type="FunCoup" id="Q7NLK5">
    <property type="interactions" value="218"/>
</dbReference>
<dbReference type="STRING" id="251221.gene:10758597"/>
<dbReference type="EnsemblBacteria" id="BAC89059">
    <property type="protein sequence ID" value="BAC89059"/>
    <property type="gene ID" value="BAC89059"/>
</dbReference>
<dbReference type="KEGG" id="gvi:glr1118"/>
<dbReference type="PATRIC" id="fig|251221.4.peg.1143"/>
<dbReference type="eggNOG" id="COG0422">
    <property type="taxonomic scope" value="Bacteria"/>
</dbReference>
<dbReference type="HOGENOM" id="CLU_013181_2_1_3"/>
<dbReference type="InParanoid" id="Q7NLK5"/>
<dbReference type="OrthoDB" id="9805897at2"/>
<dbReference type="PhylomeDB" id="Q7NLK5"/>
<dbReference type="UniPathway" id="UPA00060"/>
<dbReference type="Proteomes" id="UP000000557">
    <property type="component" value="Chromosome"/>
</dbReference>
<dbReference type="GO" id="GO:0005829">
    <property type="term" value="C:cytosol"/>
    <property type="evidence" value="ECO:0000318"/>
    <property type="project" value="GO_Central"/>
</dbReference>
<dbReference type="GO" id="GO:0051539">
    <property type="term" value="F:4 iron, 4 sulfur cluster binding"/>
    <property type="evidence" value="ECO:0007669"/>
    <property type="project" value="UniProtKB-KW"/>
</dbReference>
<dbReference type="GO" id="GO:0016830">
    <property type="term" value="F:carbon-carbon lyase activity"/>
    <property type="evidence" value="ECO:0007669"/>
    <property type="project" value="InterPro"/>
</dbReference>
<dbReference type="GO" id="GO:0008270">
    <property type="term" value="F:zinc ion binding"/>
    <property type="evidence" value="ECO:0007669"/>
    <property type="project" value="UniProtKB-UniRule"/>
</dbReference>
<dbReference type="GO" id="GO:0009228">
    <property type="term" value="P:thiamine biosynthetic process"/>
    <property type="evidence" value="ECO:0000318"/>
    <property type="project" value="GO_Central"/>
</dbReference>
<dbReference type="GO" id="GO:0009229">
    <property type="term" value="P:thiamine diphosphate biosynthetic process"/>
    <property type="evidence" value="ECO:0007669"/>
    <property type="project" value="UniProtKB-UniRule"/>
</dbReference>
<dbReference type="FunFam" id="3.20.20.540:FF:000001">
    <property type="entry name" value="Phosphomethylpyrimidine synthase"/>
    <property type="match status" value="1"/>
</dbReference>
<dbReference type="Gene3D" id="6.10.250.620">
    <property type="match status" value="1"/>
</dbReference>
<dbReference type="Gene3D" id="3.20.20.540">
    <property type="entry name" value="Radical SAM ThiC family, central domain"/>
    <property type="match status" value="1"/>
</dbReference>
<dbReference type="HAMAP" id="MF_00089">
    <property type="entry name" value="ThiC"/>
    <property type="match status" value="1"/>
</dbReference>
<dbReference type="InterPro" id="IPR037509">
    <property type="entry name" value="ThiC"/>
</dbReference>
<dbReference type="InterPro" id="IPR038521">
    <property type="entry name" value="ThiC/Bza_core_dom"/>
</dbReference>
<dbReference type="InterPro" id="IPR002817">
    <property type="entry name" value="ThiC/BzaA/B"/>
</dbReference>
<dbReference type="NCBIfam" id="NF006763">
    <property type="entry name" value="PRK09284.1"/>
    <property type="match status" value="1"/>
</dbReference>
<dbReference type="NCBIfam" id="NF009895">
    <property type="entry name" value="PRK13352.1"/>
    <property type="match status" value="1"/>
</dbReference>
<dbReference type="NCBIfam" id="TIGR00190">
    <property type="entry name" value="thiC"/>
    <property type="match status" value="1"/>
</dbReference>
<dbReference type="PANTHER" id="PTHR30557:SF1">
    <property type="entry name" value="PHOSPHOMETHYLPYRIMIDINE SYNTHASE, CHLOROPLASTIC"/>
    <property type="match status" value="1"/>
</dbReference>
<dbReference type="PANTHER" id="PTHR30557">
    <property type="entry name" value="THIAMINE BIOSYNTHESIS PROTEIN THIC"/>
    <property type="match status" value="1"/>
</dbReference>
<dbReference type="Pfam" id="PF01964">
    <property type="entry name" value="ThiC_Rad_SAM"/>
    <property type="match status" value="1"/>
</dbReference>
<dbReference type="SFLD" id="SFLDF00407">
    <property type="entry name" value="phosphomethylpyrimidine_syntha"/>
    <property type="match status" value="1"/>
</dbReference>
<dbReference type="SFLD" id="SFLDG01114">
    <property type="entry name" value="phosphomethylpyrimidine_syntha"/>
    <property type="match status" value="1"/>
</dbReference>
<dbReference type="SFLD" id="SFLDS00113">
    <property type="entry name" value="Radical_SAM_Phosphomethylpyrim"/>
    <property type="match status" value="1"/>
</dbReference>
<evidence type="ECO:0000255" key="1">
    <source>
        <dbReference type="HAMAP-Rule" id="MF_00089"/>
    </source>
</evidence>
<gene>
    <name evidence="1" type="primary">thiC</name>
    <name type="ordered locus">glr1118</name>
</gene>
<feature type="chain" id="PRO_0000152809" description="Phosphomethylpyrimidine synthase">
    <location>
        <begin position="1"/>
        <end position="459"/>
    </location>
</feature>
<feature type="binding site" evidence="1">
    <location>
        <position position="81"/>
    </location>
    <ligand>
        <name>substrate</name>
    </ligand>
</feature>
<feature type="binding site" evidence="1">
    <location>
        <position position="110"/>
    </location>
    <ligand>
        <name>substrate</name>
    </ligand>
</feature>
<feature type="binding site" evidence="1">
    <location>
        <position position="140"/>
    </location>
    <ligand>
        <name>substrate</name>
    </ligand>
</feature>
<feature type="binding site" evidence="1">
    <location>
        <position position="176"/>
    </location>
    <ligand>
        <name>substrate</name>
    </ligand>
</feature>
<feature type="binding site" evidence="1">
    <location>
        <begin position="196"/>
        <end position="198"/>
    </location>
    <ligand>
        <name>substrate</name>
    </ligand>
</feature>
<feature type="binding site" evidence="1">
    <location>
        <begin position="237"/>
        <end position="240"/>
    </location>
    <ligand>
        <name>substrate</name>
    </ligand>
</feature>
<feature type="binding site" evidence="1">
    <location>
        <position position="276"/>
    </location>
    <ligand>
        <name>substrate</name>
    </ligand>
</feature>
<feature type="binding site" evidence="1">
    <location>
        <position position="280"/>
    </location>
    <ligand>
        <name>Zn(2+)</name>
        <dbReference type="ChEBI" id="CHEBI:29105"/>
    </ligand>
</feature>
<feature type="binding site" evidence="1">
    <location>
        <position position="303"/>
    </location>
    <ligand>
        <name>substrate</name>
    </ligand>
</feature>
<feature type="binding site" evidence="1">
    <location>
        <position position="344"/>
    </location>
    <ligand>
        <name>Zn(2+)</name>
        <dbReference type="ChEBI" id="CHEBI:29105"/>
    </ligand>
</feature>
<feature type="binding site" evidence="1">
    <location>
        <position position="424"/>
    </location>
    <ligand>
        <name>[4Fe-4S] cluster</name>
        <dbReference type="ChEBI" id="CHEBI:49883"/>
        <note>4Fe-4S-S-AdoMet</note>
    </ligand>
</feature>
<feature type="binding site" evidence="1">
    <location>
        <position position="427"/>
    </location>
    <ligand>
        <name>[4Fe-4S] cluster</name>
        <dbReference type="ChEBI" id="CHEBI:49883"/>
        <note>4Fe-4S-S-AdoMet</note>
    </ligand>
</feature>
<feature type="binding site" evidence="1">
    <location>
        <position position="432"/>
    </location>
    <ligand>
        <name>[4Fe-4S] cluster</name>
        <dbReference type="ChEBI" id="CHEBI:49883"/>
        <note>4Fe-4S-S-AdoMet</note>
    </ligand>
</feature>
<name>THIC_GLOVI</name>
<proteinExistence type="inferred from homology"/>
<keyword id="KW-0004">4Fe-4S</keyword>
<keyword id="KW-0408">Iron</keyword>
<keyword id="KW-0411">Iron-sulfur</keyword>
<keyword id="KW-0456">Lyase</keyword>
<keyword id="KW-0479">Metal-binding</keyword>
<keyword id="KW-1185">Reference proteome</keyword>
<keyword id="KW-0949">S-adenosyl-L-methionine</keyword>
<keyword id="KW-0784">Thiamine biosynthesis</keyword>
<keyword id="KW-0862">Zinc</keyword>
<sequence>MLRTEWIARRHGHANVSQMYYARQGLITEEVAYVAHRENLEPELVRSEVARGRLIIPANTNHPNLEPMGIGIATRCKVNANIGASPNASNLGEEVAKLELAVKYGADTVMDLSTGGGDLDAIRSAIIQASPVPIGTVPMYQALEAVHGNVEKLTPEHILDVIEKHAKQGVDYMTIHAGILIEHLPLTQGRLTGIVSRGGGILARWMLAHHKQNPLYTHFDEIINIFKKYDVSFSLGDSLRPGCQHDASDAAQFAELKTLGELTRRAWTHDVQVMVEGPGHVPMHQIEMNVRKQMQECSEAPFYVLGPLVTDIAPGYDHITSAIGAALAGWYGTAMLCYVTPKEHLGLPNAEDVRTGLIAYKIAAHAADIARGRPGARDRDDELSRARYNFDWNRQFELSLDPERAREYHDETLPADIYKSAEFCSMCGPKFCPMQTKIDSQALSELEAALKPQPVAAQE</sequence>
<accession>Q7NLK5</accession>
<reference key="1">
    <citation type="journal article" date="2003" name="DNA Res.">
        <title>Complete genome structure of Gloeobacter violaceus PCC 7421, a cyanobacterium that lacks thylakoids.</title>
        <authorList>
            <person name="Nakamura Y."/>
            <person name="Kaneko T."/>
            <person name="Sato S."/>
            <person name="Mimuro M."/>
            <person name="Miyashita H."/>
            <person name="Tsuchiya T."/>
            <person name="Sasamoto S."/>
            <person name="Watanabe A."/>
            <person name="Kawashima K."/>
            <person name="Kishida Y."/>
            <person name="Kiyokawa C."/>
            <person name="Kohara M."/>
            <person name="Matsumoto M."/>
            <person name="Matsuno A."/>
            <person name="Nakazaki N."/>
            <person name="Shimpo S."/>
            <person name="Takeuchi C."/>
            <person name="Yamada M."/>
            <person name="Tabata S."/>
        </authorList>
    </citation>
    <scope>NUCLEOTIDE SEQUENCE [LARGE SCALE GENOMIC DNA]</scope>
    <source>
        <strain>ATCC 29082 / PCC 7421</strain>
    </source>
</reference>